<reference key="1">
    <citation type="submission" date="2001-10" db="EMBL/GenBank/DDBJ databases">
        <title>A novel FERM containing protein sequence.</title>
        <authorList>
            <person name="Gunn-Moore F.J."/>
            <person name="Tait S."/>
            <person name="Brophy P.J."/>
        </authorList>
    </citation>
    <scope>NUCLEOTIDE SEQUENCE [MRNA]</scope>
    <source>
        <strain>Sprague-Dawley</strain>
    </source>
</reference>
<gene>
    <name type="primary">Frmd6</name>
</gene>
<protein>
    <recommendedName>
        <fullName>FERM domain-containing protein 6</fullName>
    </recommendedName>
    <alternativeName>
        <fullName>FERM domain-containing protein 163SCII</fullName>
    </alternativeName>
</protein>
<sequence length="327" mass="38847">MNKLTFHNNKVMQDRRRVCIFLPNDKSVSIIINVKILCHQLLVQVCDLLRLKDSHLFGLSVIQNNEHVYMELSQKLYKYCPKEWKKEASKGIDQFGPPMIIHFRVQYYVENGKLISDRIARYYYYWHLRKQVLHSQCVLREEAYFLLAAFALQADLGNFKRKVHHGDYFEPEAYFPAWVVSKRGKDYILKHIPNMHRDQFALTASEAYLKYIKEAVRLDDVAIHYYRLYKDKREVEGSLTLGLTMRGIQIFQNLEEEKQLLYDFPWTNVGKLVFVGKKFEILPDGLPSARKLVYYTGCPTRSRHLLQLLSNSHRLYMNLQPVLRHLR</sequence>
<evidence type="ECO:0000250" key="1">
    <source>
        <dbReference type="UniProtKB" id="Q96NE9"/>
    </source>
</evidence>
<evidence type="ECO:0000255" key="2">
    <source>
        <dbReference type="PROSITE-ProRule" id="PRU00084"/>
    </source>
</evidence>
<evidence type="ECO:0000305" key="3"/>
<comment type="subcellular location">
    <subcellularLocation>
        <location evidence="1">Cytoplasm</location>
    </subcellularLocation>
    <subcellularLocation>
        <location evidence="1">Cell membrane</location>
        <topology evidence="1">Peripheral membrane protein</topology>
        <orientation evidence="1">Cytoplasmic side</orientation>
    </subcellularLocation>
    <text evidence="1">Can colocalize with actin.</text>
</comment>
<comment type="sequence caution" evidence="3">
    <conflict type="erroneous initiation">
        <sequence resource="EMBL-CDS" id="AAL32467"/>
    </conflict>
</comment>
<keyword id="KW-1003">Cell membrane</keyword>
<keyword id="KW-0963">Cytoplasm</keyword>
<keyword id="KW-0472">Membrane</keyword>
<keyword id="KW-1185">Reference proteome</keyword>
<accession>Q8VII0</accession>
<organism>
    <name type="scientific">Rattus norvegicus</name>
    <name type="common">Rat</name>
    <dbReference type="NCBI Taxonomy" id="10116"/>
    <lineage>
        <taxon>Eukaryota</taxon>
        <taxon>Metazoa</taxon>
        <taxon>Chordata</taxon>
        <taxon>Craniata</taxon>
        <taxon>Vertebrata</taxon>
        <taxon>Euteleostomi</taxon>
        <taxon>Mammalia</taxon>
        <taxon>Eutheria</taxon>
        <taxon>Euarchontoglires</taxon>
        <taxon>Glires</taxon>
        <taxon>Rodentia</taxon>
        <taxon>Myomorpha</taxon>
        <taxon>Muroidea</taxon>
        <taxon>Muridae</taxon>
        <taxon>Murinae</taxon>
        <taxon>Rattus</taxon>
    </lineage>
</organism>
<name>FRMD6_RAT</name>
<proteinExistence type="evidence at transcript level"/>
<dbReference type="EMBL" id="AF441249">
    <property type="protein sequence ID" value="AAL32467.1"/>
    <property type="status" value="ALT_INIT"/>
    <property type="molecule type" value="mRNA"/>
</dbReference>
<dbReference type="SMR" id="Q8VII0"/>
<dbReference type="FunCoup" id="Q8VII0">
    <property type="interactions" value="200"/>
</dbReference>
<dbReference type="STRING" id="10116.ENSRNOP00000009610"/>
<dbReference type="PhosphoSitePlus" id="Q8VII0"/>
<dbReference type="PaxDb" id="10116-ENSRNOP00000009610"/>
<dbReference type="UCSC" id="RGD:727810">
    <property type="organism name" value="rat"/>
</dbReference>
<dbReference type="AGR" id="RGD:727810"/>
<dbReference type="RGD" id="727810">
    <property type="gene designation" value="Frmd6"/>
</dbReference>
<dbReference type="eggNOG" id="KOG4371">
    <property type="taxonomic scope" value="Eukaryota"/>
</dbReference>
<dbReference type="InParanoid" id="Q8VII0"/>
<dbReference type="Proteomes" id="UP000002494">
    <property type="component" value="Unplaced"/>
</dbReference>
<dbReference type="GO" id="GO:0043296">
    <property type="term" value="C:apical junction complex"/>
    <property type="evidence" value="ECO:0000266"/>
    <property type="project" value="RGD"/>
</dbReference>
<dbReference type="GO" id="GO:0005737">
    <property type="term" value="C:cytoplasm"/>
    <property type="evidence" value="ECO:0000250"/>
    <property type="project" value="UniProtKB"/>
</dbReference>
<dbReference type="GO" id="GO:0005856">
    <property type="term" value="C:cytoskeleton"/>
    <property type="evidence" value="ECO:0007669"/>
    <property type="project" value="InterPro"/>
</dbReference>
<dbReference type="GO" id="GO:0005886">
    <property type="term" value="C:plasma membrane"/>
    <property type="evidence" value="ECO:0000250"/>
    <property type="project" value="UniProtKB"/>
</dbReference>
<dbReference type="GO" id="GO:0003383">
    <property type="term" value="P:apical constriction"/>
    <property type="evidence" value="ECO:0000266"/>
    <property type="project" value="RGD"/>
</dbReference>
<dbReference type="GO" id="GO:0008104">
    <property type="term" value="P:protein localization"/>
    <property type="evidence" value="ECO:0000266"/>
    <property type="project" value="RGD"/>
</dbReference>
<dbReference type="GO" id="GO:0032970">
    <property type="term" value="P:regulation of actin filament-based process"/>
    <property type="evidence" value="ECO:0000266"/>
    <property type="project" value="RGD"/>
</dbReference>
<dbReference type="CDD" id="cd14473">
    <property type="entry name" value="FERM_B-lobe"/>
    <property type="match status" value="1"/>
</dbReference>
<dbReference type="CDD" id="cd13185">
    <property type="entry name" value="FERM_C_FRMD1_FRMD6"/>
    <property type="match status" value="1"/>
</dbReference>
<dbReference type="FunFam" id="1.20.80.10:FF:000015">
    <property type="entry name" value="FERM domain-containing protein 6 isoform X2"/>
    <property type="match status" value="1"/>
</dbReference>
<dbReference type="FunFam" id="2.30.29.30:FF:000134">
    <property type="entry name" value="Putative FERM domain-containing protein 6"/>
    <property type="match status" value="1"/>
</dbReference>
<dbReference type="FunFam" id="3.10.20.90:FF:000079">
    <property type="entry name" value="Putative FERM domain-containing protein 6"/>
    <property type="match status" value="1"/>
</dbReference>
<dbReference type="Gene3D" id="1.20.80.10">
    <property type="match status" value="1"/>
</dbReference>
<dbReference type="Gene3D" id="3.10.20.90">
    <property type="entry name" value="Phosphatidylinositol 3-kinase Catalytic Subunit, Chain A, domain 1"/>
    <property type="match status" value="1"/>
</dbReference>
<dbReference type="Gene3D" id="2.30.29.30">
    <property type="entry name" value="Pleckstrin-homology domain (PH domain)/Phosphotyrosine-binding domain (PTB)"/>
    <property type="match status" value="1"/>
</dbReference>
<dbReference type="InterPro" id="IPR019749">
    <property type="entry name" value="Band_41_domain"/>
</dbReference>
<dbReference type="InterPro" id="IPR014352">
    <property type="entry name" value="FERM/acyl-CoA-bd_prot_sf"/>
</dbReference>
<dbReference type="InterPro" id="IPR035963">
    <property type="entry name" value="FERM_2"/>
</dbReference>
<dbReference type="InterPro" id="IPR019748">
    <property type="entry name" value="FERM_central"/>
</dbReference>
<dbReference type="InterPro" id="IPR000299">
    <property type="entry name" value="FERM_domain"/>
</dbReference>
<dbReference type="InterPro" id="IPR018979">
    <property type="entry name" value="FERM_N"/>
</dbReference>
<dbReference type="InterPro" id="IPR018980">
    <property type="entry name" value="FERM_PH-like_C"/>
</dbReference>
<dbReference type="InterPro" id="IPR041781">
    <property type="entry name" value="FRMD6-FERM_C"/>
</dbReference>
<dbReference type="InterPro" id="IPR047145">
    <property type="entry name" value="FRMD6-like"/>
</dbReference>
<dbReference type="InterPro" id="IPR011993">
    <property type="entry name" value="PH-like_dom_sf"/>
</dbReference>
<dbReference type="InterPro" id="IPR029071">
    <property type="entry name" value="Ubiquitin-like_domsf"/>
</dbReference>
<dbReference type="PANTHER" id="PTHR13429">
    <property type="entry name" value="FERM DOMAIN (PROTEIN4.1-EZRIN-RADIXIN-MOESIN) FAMILY"/>
    <property type="match status" value="1"/>
</dbReference>
<dbReference type="PANTHER" id="PTHR13429:SF11">
    <property type="entry name" value="FERM DOMAIN-CONTAINING PROTEIN 6"/>
    <property type="match status" value="1"/>
</dbReference>
<dbReference type="Pfam" id="PF09380">
    <property type="entry name" value="FERM_C"/>
    <property type="match status" value="1"/>
</dbReference>
<dbReference type="Pfam" id="PF00373">
    <property type="entry name" value="FERM_M"/>
    <property type="match status" value="1"/>
</dbReference>
<dbReference type="Pfam" id="PF09379">
    <property type="entry name" value="FERM_N"/>
    <property type="match status" value="1"/>
</dbReference>
<dbReference type="SMART" id="SM00295">
    <property type="entry name" value="B41"/>
    <property type="match status" value="1"/>
</dbReference>
<dbReference type="SMART" id="SM01196">
    <property type="entry name" value="FERM_C"/>
    <property type="match status" value="1"/>
</dbReference>
<dbReference type="SUPFAM" id="SSF50729">
    <property type="entry name" value="PH domain-like"/>
    <property type="match status" value="1"/>
</dbReference>
<dbReference type="SUPFAM" id="SSF47031">
    <property type="entry name" value="Second domain of FERM"/>
    <property type="match status" value="1"/>
</dbReference>
<dbReference type="SUPFAM" id="SSF54236">
    <property type="entry name" value="Ubiquitin-like"/>
    <property type="match status" value="1"/>
</dbReference>
<dbReference type="PROSITE" id="PS50057">
    <property type="entry name" value="FERM_3"/>
    <property type="match status" value="1"/>
</dbReference>
<feature type="chain" id="PRO_0000219450" description="FERM domain-containing protein 6">
    <location>
        <begin position="1"/>
        <end position="327" status="greater than"/>
    </location>
</feature>
<feature type="domain" description="FERM" evidence="2">
    <location>
        <begin position="16"/>
        <end position="320"/>
    </location>
</feature>
<feature type="non-terminal residue">
    <location>
        <position position="327"/>
    </location>
</feature>